<accession>Q2HDP2</accession>
<reference key="1">
    <citation type="journal article" date="2015" name="Genome Announc.">
        <title>Draft genome sequence of the cellulolytic fungus Chaetomium globosum.</title>
        <authorList>
            <person name="Cuomo C.A."/>
            <person name="Untereiner W.A."/>
            <person name="Ma L.-J."/>
            <person name="Grabherr M."/>
            <person name="Birren B.W."/>
        </authorList>
    </citation>
    <scope>NUCLEOTIDE SEQUENCE [LARGE SCALE GENOMIC DNA]</scope>
    <source>
        <strain>ATCC 6205 / CBS 148.51 / DSM 1962 / NBRC 6347 / NRRL 1970</strain>
    </source>
</reference>
<feature type="chain" id="PRO_0000330234" description="tRNA-dihydrouridine(47) synthase [NAD(P)(+)]">
    <location>
        <begin position="1"/>
        <end position="713"/>
    </location>
</feature>
<feature type="zinc finger region" description="C3H1-type 1">
    <location>
        <begin position="125"/>
        <end position="149"/>
    </location>
</feature>
<feature type="zinc finger region" description="C3H1-type 2">
    <location>
        <begin position="170"/>
        <end position="191"/>
    </location>
</feature>
<feature type="region of interest" description="Disordered" evidence="4">
    <location>
        <begin position="1"/>
        <end position="117"/>
    </location>
</feature>
<feature type="compositionally biased region" description="Basic and acidic residues" evidence="4">
    <location>
        <begin position="1"/>
        <end position="12"/>
    </location>
</feature>
<feature type="compositionally biased region" description="Acidic residues" evidence="4">
    <location>
        <begin position="72"/>
        <end position="81"/>
    </location>
</feature>
<feature type="compositionally biased region" description="Low complexity" evidence="4">
    <location>
        <begin position="86"/>
        <end position="98"/>
    </location>
</feature>
<feature type="active site" description="Proton donor" evidence="2">
    <location>
        <position position="416"/>
    </location>
</feature>
<feature type="binding site" evidence="2">
    <location>
        <begin position="309"/>
        <end position="311"/>
    </location>
    <ligand>
        <name>FMN</name>
        <dbReference type="ChEBI" id="CHEBI:58210"/>
    </ligand>
</feature>
<feature type="binding site" evidence="2">
    <location>
        <position position="384"/>
    </location>
    <ligand>
        <name>FMN</name>
        <dbReference type="ChEBI" id="CHEBI:58210"/>
    </ligand>
</feature>
<feature type="binding site" evidence="2">
    <location>
        <position position="456"/>
    </location>
    <ligand>
        <name>FMN</name>
        <dbReference type="ChEBI" id="CHEBI:58210"/>
    </ligand>
</feature>
<feature type="binding site" evidence="2">
    <location>
        <position position="497"/>
    </location>
    <ligand>
        <name>FMN</name>
        <dbReference type="ChEBI" id="CHEBI:58210"/>
    </ligand>
</feature>
<feature type="binding site" evidence="2">
    <location>
        <begin position="554"/>
        <end position="556"/>
    </location>
    <ligand>
        <name>FMN</name>
        <dbReference type="ChEBI" id="CHEBI:58210"/>
    </ligand>
</feature>
<feature type="binding site" evidence="2">
    <location>
        <begin position="578"/>
        <end position="579"/>
    </location>
    <ligand>
        <name>FMN</name>
        <dbReference type="ChEBI" id="CHEBI:58210"/>
    </ligand>
</feature>
<protein>
    <recommendedName>
        <fullName>tRNA-dihydrouridine(47) synthase [NAD(P)(+)]</fullName>
        <ecNumber evidence="1">1.3.1.89</ecNumber>
    </recommendedName>
    <alternativeName>
        <fullName>mRNA-dihydrouridine synthase DUS3</fullName>
        <ecNumber evidence="3">1.3.1.-</ecNumber>
    </alternativeName>
    <alternativeName>
        <fullName>tRNA-dihydrouridine synthase 3</fullName>
    </alternativeName>
</protein>
<organism>
    <name type="scientific">Chaetomium globosum (strain ATCC 6205 / CBS 148.51 / DSM 1962 / NBRC 6347 / NRRL 1970)</name>
    <name type="common">Soil fungus</name>
    <dbReference type="NCBI Taxonomy" id="306901"/>
    <lineage>
        <taxon>Eukaryota</taxon>
        <taxon>Fungi</taxon>
        <taxon>Dikarya</taxon>
        <taxon>Ascomycota</taxon>
        <taxon>Pezizomycotina</taxon>
        <taxon>Sordariomycetes</taxon>
        <taxon>Sordariomycetidae</taxon>
        <taxon>Sordariales</taxon>
        <taxon>Chaetomiaceae</taxon>
        <taxon>Chaetomium</taxon>
    </lineage>
</organism>
<gene>
    <name type="primary">DUS3</name>
    <name type="ORF">CHGG_01662</name>
</gene>
<dbReference type="EC" id="1.3.1.89" evidence="1"/>
<dbReference type="EC" id="1.3.1.-" evidence="3"/>
<dbReference type="EMBL" id="CH408029">
    <property type="protein sequence ID" value="EAQ93427.1"/>
    <property type="status" value="ALT_SEQ"/>
    <property type="molecule type" value="Genomic_DNA"/>
</dbReference>
<dbReference type="RefSeq" id="XP_001220883.1">
    <property type="nucleotide sequence ID" value="XM_001220882.1"/>
</dbReference>
<dbReference type="SMR" id="Q2HDP2"/>
<dbReference type="FunCoup" id="Q2HDP2">
    <property type="interactions" value="813"/>
</dbReference>
<dbReference type="STRING" id="306901.Q2HDP2"/>
<dbReference type="GeneID" id="4388035"/>
<dbReference type="VEuPathDB" id="FungiDB:CHGG_01662"/>
<dbReference type="HOGENOM" id="CLU_013299_7_0_1"/>
<dbReference type="InParanoid" id="Q2HDP2"/>
<dbReference type="OrthoDB" id="259935at2759"/>
<dbReference type="Proteomes" id="UP000001056">
    <property type="component" value="Unassembled WGS sequence"/>
</dbReference>
<dbReference type="GO" id="GO:0005737">
    <property type="term" value="C:cytoplasm"/>
    <property type="evidence" value="ECO:0007669"/>
    <property type="project" value="UniProtKB-SubCell"/>
</dbReference>
<dbReference type="GO" id="GO:0005634">
    <property type="term" value="C:nucleus"/>
    <property type="evidence" value="ECO:0007669"/>
    <property type="project" value="UniProtKB-SubCell"/>
</dbReference>
<dbReference type="GO" id="GO:0050660">
    <property type="term" value="F:flavin adenine dinucleotide binding"/>
    <property type="evidence" value="ECO:0007669"/>
    <property type="project" value="InterPro"/>
</dbReference>
<dbReference type="GO" id="GO:0106414">
    <property type="term" value="F:mRNA dihydrouridine synthase activity"/>
    <property type="evidence" value="ECO:0007669"/>
    <property type="project" value="RHEA"/>
</dbReference>
<dbReference type="GO" id="GO:0003723">
    <property type="term" value="F:RNA binding"/>
    <property type="evidence" value="ECO:0007669"/>
    <property type="project" value="TreeGrafter"/>
</dbReference>
<dbReference type="GO" id="GO:0102265">
    <property type="term" value="F:tRNA-dihydrouridine47 synthase activity"/>
    <property type="evidence" value="ECO:0007669"/>
    <property type="project" value="UniProtKB-EC"/>
</dbReference>
<dbReference type="GO" id="GO:0008270">
    <property type="term" value="F:zinc ion binding"/>
    <property type="evidence" value="ECO:0007669"/>
    <property type="project" value="UniProtKB-KW"/>
</dbReference>
<dbReference type="GO" id="GO:0006397">
    <property type="term" value="P:mRNA processing"/>
    <property type="evidence" value="ECO:0007669"/>
    <property type="project" value="UniProtKB-KW"/>
</dbReference>
<dbReference type="CDD" id="cd02801">
    <property type="entry name" value="DUS_like_FMN"/>
    <property type="match status" value="1"/>
</dbReference>
<dbReference type="FunFam" id="3.20.20.70:FF:000145">
    <property type="entry name" value="tRNA-dihydrouridine(47) synthase [NAD(P)(+)]"/>
    <property type="match status" value="1"/>
</dbReference>
<dbReference type="Gene3D" id="3.20.20.70">
    <property type="entry name" value="Aldolase class I"/>
    <property type="match status" value="1"/>
</dbReference>
<dbReference type="Gene3D" id="4.10.1000.10">
    <property type="entry name" value="Zinc finger, CCCH-type"/>
    <property type="match status" value="1"/>
</dbReference>
<dbReference type="InterPro" id="IPR013785">
    <property type="entry name" value="Aldolase_TIM"/>
</dbReference>
<dbReference type="InterPro" id="IPR035587">
    <property type="entry name" value="DUS-like_FMN-bd"/>
</dbReference>
<dbReference type="InterPro" id="IPR018517">
    <property type="entry name" value="tRNA_hU_synthase_CS"/>
</dbReference>
<dbReference type="PANTHER" id="PTHR45846">
    <property type="entry name" value="TRNA-DIHYDROURIDINE(47) SYNTHASE [NAD(P)(+)]-LIKE"/>
    <property type="match status" value="1"/>
</dbReference>
<dbReference type="PANTHER" id="PTHR45846:SF1">
    <property type="entry name" value="TRNA-DIHYDROURIDINE(47) SYNTHASE [NAD(P)(+)]-LIKE"/>
    <property type="match status" value="1"/>
</dbReference>
<dbReference type="Pfam" id="PF01207">
    <property type="entry name" value="Dus"/>
    <property type="match status" value="2"/>
</dbReference>
<dbReference type="SUPFAM" id="SSF51395">
    <property type="entry name" value="FMN-linked oxidoreductases"/>
    <property type="match status" value="1"/>
</dbReference>
<dbReference type="PROSITE" id="PS01136">
    <property type="entry name" value="UPF0034"/>
    <property type="match status" value="1"/>
</dbReference>
<name>DUS3_CHAGB</name>
<comment type="function">
    <text evidence="1 3">Catalyzes the synthesis of dihydrouridine, a modified base found in the D-loop of most tRNAs. Specifically modifies U47 in cytoplasmic tRNAs (By similarity). Catalyzes the synthesis of dihydrouridine in some mRNAs, thereby affecting their translation (By similarity).</text>
</comment>
<comment type="catalytic activity">
    <reaction evidence="1">
        <text>5,6-dihydrouridine(47) in tRNA + NAD(+) = uridine(47) in tRNA + NADH + H(+)</text>
        <dbReference type="Rhea" id="RHEA:53364"/>
        <dbReference type="Rhea" id="RHEA-COMP:13539"/>
        <dbReference type="Rhea" id="RHEA-COMP:13540"/>
        <dbReference type="ChEBI" id="CHEBI:15378"/>
        <dbReference type="ChEBI" id="CHEBI:57540"/>
        <dbReference type="ChEBI" id="CHEBI:57945"/>
        <dbReference type="ChEBI" id="CHEBI:65315"/>
        <dbReference type="ChEBI" id="CHEBI:74443"/>
        <dbReference type="EC" id="1.3.1.89"/>
    </reaction>
    <physiologicalReaction direction="right-to-left" evidence="1">
        <dbReference type="Rhea" id="RHEA:53366"/>
    </physiologicalReaction>
</comment>
<comment type="catalytic activity">
    <reaction evidence="1">
        <text>5,6-dihydrouridine(47) in tRNA + NADP(+) = uridine(47) in tRNA + NADPH + H(+)</text>
        <dbReference type="Rhea" id="RHEA:53360"/>
        <dbReference type="Rhea" id="RHEA-COMP:13539"/>
        <dbReference type="Rhea" id="RHEA-COMP:13540"/>
        <dbReference type="ChEBI" id="CHEBI:15378"/>
        <dbReference type="ChEBI" id="CHEBI:57783"/>
        <dbReference type="ChEBI" id="CHEBI:58349"/>
        <dbReference type="ChEBI" id="CHEBI:65315"/>
        <dbReference type="ChEBI" id="CHEBI:74443"/>
        <dbReference type="EC" id="1.3.1.89"/>
    </reaction>
    <physiologicalReaction direction="right-to-left" evidence="1">
        <dbReference type="Rhea" id="RHEA:53362"/>
    </physiologicalReaction>
</comment>
<comment type="catalytic activity">
    <reaction evidence="3">
        <text>a 5,6-dihydrouridine in mRNA + NAD(+) = a uridine in mRNA + NADH + H(+)</text>
        <dbReference type="Rhea" id="RHEA:69851"/>
        <dbReference type="Rhea" id="RHEA-COMP:14658"/>
        <dbReference type="Rhea" id="RHEA-COMP:17789"/>
        <dbReference type="ChEBI" id="CHEBI:15378"/>
        <dbReference type="ChEBI" id="CHEBI:57540"/>
        <dbReference type="ChEBI" id="CHEBI:57945"/>
        <dbReference type="ChEBI" id="CHEBI:65315"/>
        <dbReference type="ChEBI" id="CHEBI:74443"/>
    </reaction>
    <physiologicalReaction direction="right-to-left" evidence="3">
        <dbReference type="Rhea" id="RHEA:69853"/>
    </physiologicalReaction>
</comment>
<comment type="catalytic activity">
    <reaction evidence="3">
        <text>a 5,6-dihydrouridine in mRNA + NADP(+) = a uridine in mRNA + NADPH + H(+)</text>
        <dbReference type="Rhea" id="RHEA:69855"/>
        <dbReference type="Rhea" id="RHEA-COMP:14658"/>
        <dbReference type="Rhea" id="RHEA-COMP:17789"/>
        <dbReference type="ChEBI" id="CHEBI:15378"/>
        <dbReference type="ChEBI" id="CHEBI:57783"/>
        <dbReference type="ChEBI" id="CHEBI:58349"/>
        <dbReference type="ChEBI" id="CHEBI:65315"/>
        <dbReference type="ChEBI" id="CHEBI:74443"/>
    </reaction>
    <physiologicalReaction direction="right-to-left" evidence="3">
        <dbReference type="Rhea" id="RHEA:69857"/>
    </physiologicalReaction>
</comment>
<comment type="cofactor">
    <cofactor evidence="2">
        <name>FMN</name>
        <dbReference type="ChEBI" id="CHEBI:58210"/>
    </cofactor>
</comment>
<comment type="subcellular location">
    <subcellularLocation>
        <location evidence="1">Cytoplasm</location>
    </subcellularLocation>
    <subcellularLocation>
        <location evidence="1">Nucleus</location>
    </subcellularLocation>
</comment>
<comment type="similarity">
    <text evidence="5">Belongs to the Dus family. Dus3 subfamily.</text>
</comment>
<comment type="sequence caution" evidence="5">
    <conflict type="erroneous gene model prediction">
        <sequence resource="EMBL-CDS" id="EAQ93427"/>
    </conflict>
</comment>
<evidence type="ECO:0000250" key="1">
    <source>
        <dbReference type="UniProtKB" id="Q06053"/>
    </source>
</evidence>
<evidence type="ECO:0000250" key="2">
    <source>
        <dbReference type="UniProtKB" id="Q5SMC7"/>
    </source>
</evidence>
<evidence type="ECO:0000250" key="3">
    <source>
        <dbReference type="UniProtKB" id="Q9UTH9"/>
    </source>
</evidence>
<evidence type="ECO:0000256" key="4">
    <source>
        <dbReference type="SAM" id="MobiDB-lite"/>
    </source>
</evidence>
<evidence type="ECO:0000305" key="5"/>
<sequence length="713" mass="79704">MEPQDRTKRPQEEDNGVPIDGHNGSNSEPAAKKIKLDSPSSADSRAKGVAPIKAEYLLFPPGQKAKPTQSEAEADDNDDDAAEGRTAPTPQETQQAPQKDGKRKSQRGQNKEREFGTFSDAQRLCNTIAWTPEFSPRPCKHGDRCNALHDLRKYLKEGRRPDITTFGGKCPVWEKYGKCPSGWRCLFVHSHMDEIKHEDGRSELVLVGDASKAPEGGEEAAGEIKPGVVNMVPVGIKYDLSKKRIPLEKSEQYLAWLAKDTKHLAKHYQKHKDDETNPNDYRAQYVEPPFKPSEKRRLYFGRETPVLAPLTTQGNLPFRRLCVELGAQVTYSEMALGLPLLQGLKADWTLMRAHESEIVPPRFNPGGPIVQGYDNSKDVKFGAQIAANAPWVAVKATEALSQLLPHLRLVDLNCGCPVDAVFKSGSGSALLDSHSKLERMIRGMNAVSGEVPITAKIRMGSRDGKLTAQKLVERLALGSEDLRDMIGAPGCAAVTLHGRTRLQRYTKAADWGYIAECAALIKQFNEKSNDLADTIREADENTLPNGGKMYFLGNGDCYSHVEYFDHVDNAKVDSVMIGRGALVKPWVFEEIEKGQYLDKSSSERLTYIEKFVRYGMEAWGSDELGLNYTRRFLLEFLSFFCRYVPIGLLERLPPNLNERPPAYRGRDDLETLFASKNYKDWIKISEMFLGPAPPGFKFQPKHKSNSYEIEAEG</sequence>
<keyword id="KW-0963">Cytoplasm</keyword>
<keyword id="KW-0285">Flavoprotein</keyword>
<keyword id="KW-0288">FMN</keyword>
<keyword id="KW-0479">Metal-binding</keyword>
<keyword id="KW-0507">mRNA processing</keyword>
<keyword id="KW-0520">NAD</keyword>
<keyword id="KW-0521">NADP</keyword>
<keyword id="KW-0539">Nucleus</keyword>
<keyword id="KW-0560">Oxidoreductase</keyword>
<keyword id="KW-1185">Reference proteome</keyword>
<keyword id="KW-0677">Repeat</keyword>
<keyword id="KW-0819">tRNA processing</keyword>
<keyword id="KW-0862">Zinc</keyword>
<keyword id="KW-0863">Zinc-finger</keyword>
<proteinExistence type="inferred from homology"/>